<comment type="function">
    <text evidence="1">Involved in the degradation of certain denaturated proteins, including DnaA, during heat shock stress.</text>
</comment>
<comment type="subcellular location">
    <subcellularLocation>
        <location evidence="1">Cytoplasm</location>
    </subcellularLocation>
</comment>
<comment type="similarity">
    <text evidence="1">Belongs to the HspQ family.</text>
</comment>
<reference key="1">
    <citation type="journal article" date="2009" name="PLoS Genet.">
        <title>Organised genome dynamics in the Escherichia coli species results in highly diverse adaptive paths.</title>
        <authorList>
            <person name="Touchon M."/>
            <person name="Hoede C."/>
            <person name="Tenaillon O."/>
            <person name="Barbe V."/>
            <person name="Baeriswyl S."/>
            <person name="Bidet P."/>
            <person name="Bingen E."/>
            <person name="Bonacorsi S."/>
            <person name="Bouchier C."/>
            <person name="Bouvet O."/>
            <person name="Calteau A."/>
            <person name="Chiapello H."/>
            <person name="Clermont O."/>
            <person name="Cruveiller S."/>
            <person name="Danchin A."/>
            <person name="Diard M."/>
            <person name="Dossat C."/>
            <person name="Karoui M.E."/>
            <person name="Frapy E."/>
            <person name="Garry L."/>
            <person name="Ghigo J.M."/>
            <person name="Gilles A.M."/>
            <person name="Johnson J."/>
            <person name="Le Bouguenec C."/>
            <person name="Lescat M."/>
            <person name="Mangenot S."/>
            <person name="Martinez-Jehanne V."/>
            <person name="Matic I."/>
            <person name="Nassif X."/>
            <person name="Oztas S."/>
            <person name="Petit M.A."/>
            <person name="Pichon C."/>
            <person name="Rouy Z."/>
            <person name="Ruf C.S."/>
            <person name="Schneider D."/>
            <person name="Tourret J."/>
            <person name="Vacherie B."/>
            <person name="Vallenet D."/>
            <person name="Medigue C."/>
            <person name="Rocha E.P.C."/>
            <person name="Denamur E."/>
        </authorList>
    </citation>
    <scope>NUCLEOTIDE SEQUENCE [LARGE SCALE GENOMIC DNA]</scope>
    <source>
        <strain>IAI39 / ExPEC</strain>
    </source>
</reference>
<accession>B7NLF0</accession>
<protein>
    <recommendedName>
        <fullName evidence="1">Heat shock protein HspQ</fullName>
    </recommendedName>
</protein>
<sequence length="105" mass="11779">MIASKFGIGQQVRHSLLGYLGVVVDIDPVYSLSEPSPDELAVNDELRAAPWYHVVMEDDNGLPVHTYLAEAQLSSELQDEHPEQPSMDELAQTIRKQLQAPRLRN</sequence>
<keyword id="KW-0963">Cytoplasm</keyword>
<keyword id="KW-0346">Stress response</keyword>
<dbReference type="EMBL" id="CU928164">
    <property type="protein sequence ID" value="CAR18306.1"/>
    <property type="molecule type" value="Genomic_DNA"/>
</dbReference>
<dbReference type="RefSeq" id="WP_001295356.1">
    <property type="nucleotide sequence ID" value="NC_011750.1"/>
</dbReference>
<dbReference type="RefSeq" id="YP_002408142.1">
    <property type="nucleotide sequence ID" value="NC_011750.1"/>
</dbReference>
<dbReference type="SMR" id="B7NLF0"/>
<dbReference type="STRING" id="585057.ECIAI39_2179"/>
<dbReference type="GeneID" id="93776448"/>
<dbReference type="KEGG" id="ect:ECIAI39_2179"/>
<dbReference type="PATRIC" id="fig|585057.6.peg.2270"/>
<dbReference type="HOGENOM" id="CLU_123865_1_0_6"/>
<dbReference type="Proteomes" id="UP000000749">
    <property type="component" value="Chromosome"/>
</dbReference>
<dbReference type="GO" id="GO:0005737">
    <property type="term" value="C:cytoplasm"/>
    <property type="evidence" value="ECO:0007669"/>
    <property type="project" value="UniProtKB-SubCell"/>
</dbReference>
<dbReference type="GO" id="GO:0003677">
    <property type="term" value="F:DNA binding"/>
    <property type="evidence" value="ECO:0007669"/>
    <property type="project" value="InterPro"/>
</dbReference>
<dbReference type="GO" id="GO:0009408">
    <property type="term" value="P:response to heat"/>
    <property type="evidence" value="ECO:0007669"/>
    <property type="project" value="UniProtKB-UniRule"/>
</dbReference>
<dbReference type="Gene3D" id="2.30.30.390">
    <property type="entry name" value="Hemimethylated DNA-binding domain"/>
    <property type="match status" value="1"/>
</dbReference>
<dbReference type="HAMAP" id="MF_01194">
    <property type="entry name" value="HspQ"/>
    <property type="match status" value="1"/>
</dbReference>
<dbReference type="InterPro" id="IPR011722">
    <property type="entry name" value="Hemimethylated_DNA-bd_dom"/>
</dbReference>
<dbReference type="InterPro" id="IPR036623">
    <property type="entry name" value="Hemimethylated_DNA-bd_sf"/>
</dbReference>
<dbReference type="InterPro" id="IPR022866">
    <property type="entry name" value="HspQ"/>
</dbReference>
<dbReference type="NCBIfam" id="NF010729">
    <property type="entry name" value="PRK14129.1"/>
    <property type="match status" value="1"/>
</dbReference>
<dbReference type="NCBIfam" id="TIGR02097">
    <property type="entry name" value="yccV"/>
    <property type="match status" value="1"/>
</dbReference>
<dbReference type="Pfam" id="PF08755">
    <property type="entry name" value="YccV-like"/>
    <property type="match status" value="1"/>
</dbReference>
<dbReference type="SMART" id="SM00992">
    <property type="entry name" value="YccV-like"/>
    <property type="match status" value="1"/>
</dbReference>
<dbReference type="SUPFAM" id="SSF141255">
    <property type="entry name" value="YccV-like"/>
    <property type="match status" value="1"/>
</dbReference>
<feature type="chain" id="PRO_1000138405" description="Heat shock protein HspQ">
    <location>
        <begin position="1"/>
        <end position="105"/>
    </location>
</feature>
<feature type="region of interest" description="Disordered" evidence="2">
    <location>
        <begin position="75"/>
        <end position="105"/>
    </location>
</feature>
<proteinExistence type="inferred from homology"/>
<evidence type="ECO:0000255" key="1">
    <source>
        <dbReference type="HAMAP-Rule" id="MF_01194"/>
    </source>
</evidence>
<evidence type="ECO:0000256" key="2">
    <source>
        <dbReference type="SAM" id="MobiDB-lite"/>
    </source>
</evidence>
<gene>
    <name evidence="1" type="primary">hspQ</name>
    <name type="ordered locus">ECIAI39_2179</name>
</gene>
<organism>
    <name type="scientific">Escherichia coli O7:K1 (strain IAI39 / ExPEC)</name>
    <dbReference type="NCBI Taxonomy" id="585057"/>
    <lineage>
        <taxon>Bacteria</taxon>
        <taxon>Pseudomonadati</taxon>
        <taxon>Pseudomonadota</taxon>
        <taxon>Gammaproteobacteria</taxon>
        <taxon>Enterobacterales</taxon>
        <taxon>Enterobacteriaceae</taxon>
        <taxon>Escherichia</taxon>
    </lineage>
</organism>
<name>HSPQ_ECO7I</name>